<name>CPSF3_BOVIN</name>
<evidence type="ECO:0000250" key="1">
    <source>
        <dbReference type="UniProtKB" id="Q9QXK7"/>
    </source>
</evidence>
<evidence type="ECO:0000250" key="2">
    <source>
        <dbReference type="UniProtKB" id="Q9UKF6"/>
    </source>
</evidence>
<evidence type="ECO:0000255" key="3"/>
<evidence type="ECO:0000305" key="4"/>
<organism>
    <name type="scientific">Bos taurus</name>
    <name type="common">Bovine</name>
    <dbReference type="NCBI Taxonomy" id="9913"/>
    <lineage>
        <taxon>Eukaryota</taxon>
        <taxon>Metazoa</taxon>
        <taxon>Chordata</taxon>
        <taxon>Craniata</taxon>
        <taxon>Vertebrata</taxon>
        <taxon>Euteleostomi</taxon>
        <taxon>Mammalia</taxon>
        <taxon>Eutheria</taxon>
        <taxon>Laurasiatheria</taxon>
        <taxon>Artiodactyla</taxon>
        <taxon>Ruminantia</taxon>
        <taxon>Pecora</taxon>
        <taxon>Bovidae</taxon>
        <taxon>Bovinae</taxon>
        <taxon>Bos</taxon>
    </lineage>
</organism>
<proteinExistence type="evidence at protein level"/>
<reference key="1">
    <citation type="journal article" date="1996" name="Science">
        <title>Sequence similarity between the 73-kilodalton protein of mammalian CPSF and a subunit of yeast polyadenylation factor I.</title>
        <authorList>
            <person name="Jenny A."/>
            <person name="Minvielle-Sebastia L."/>
            <person name="Preker P.J."/>
            <person name="Keller W."/>
        </authorList>
    </citation>
    <scope>NUCLEOTIDE SEQUENCE [MRNA]</scope>
</reference>
<reference key="2">
    <citation type="submission" date="2005-09" db="EMBL/GenBank/DDBJ databases">
        <authorList>
            <consortium name="NIH - Mammalian Gene Collection (MGC) project"/>
        </authorList>
    </citation>
    <scope>NUCLEOTIDE SEQUENCE [LARGE SCALE MRNA]</scope>
    <source>
        <strain>Hereford</strain>
        <tissue>Uterus</tissue>
    </source>
</reference>
<comment type="function">
    <text evidence="1 2">Component of the cleavage and polyadenylation specificity factor (CPSF) complex that plays a key role in pre-mRNA 3'-end formation, recognizing the AAUAAA signal sequence and interacting with poly(A) polymerase and other factors to bring about cleavage and poly(A) addition. Has endonuclease activity, and functions as an mRNA 3'-end-processing endonuclease. Also involved in the histone 3'-end pre-mRNA processing. U7 snRNP-dependent protein that induces both the 3'-endoribonucleolytic cleavage of histone pre-mRNAs and acts as a 5' to 3' exonuclease for degrading the subsequent downstream cleavage product (DCP) of mature histone mRNAs. Cleavage occurs after the 5'-ACCCA-3' sequence in the histone pre-mRNA leaving a 3'hydroxyl group on the upstream fragment containing the stem loop (SL) and 5' phosphate on the downstream cleavage product (DCP) starting with CU nucleotides. The U7-dependent 5' to 3' exonuclease activity is processive and degrades the DCP RNA substrate even after complete removal of the U7-binding site. Binds to the downstream cleavage product (DCP) of histone pre-mRNAs and the cleaved DCP RNA substrate in a U7 snRNP dependent manner. Required for entering/progressing through S-phase of the cell cycle (By similarity). Required for the selective processing of microRNAs (miRNAs) during embryonic stem cell differentiation via its interaction with ISY1 (By similarity). Required for the biogenesis of all miRNAs from the pri-miR-17-92 primary transcript except miR-92a (By similarity). Only required for the biogenesis of miR-290 and miR-96 from the pri-miR-290-295 and pri-miR-96-183 primary transcripts, respectively (By similarity).</text>
</comment>
<comment type="cofactor">
    <cofactor evidence="2">
        <name>Zn(2+)</name>
        <dbReference type="ChEBI" id="CHEBI:29105"/>
    </cofactor>
    <text evidence="2">Binds 2 Zn(2+) ions per subunit.</text>
</comment>
<comment type="subunit">
    <text evidence="1 2">Component of the cleavage and polyadenylation specificity factor (CPSF) complex, composed of CPSF1, CPSF2, CPSF3, CPSF4 and FIP1L1. Interacts with CPSF2, CSTF2 and SYMPK. Interacts with TUT1; the interaction is direct and mediates the recruitment of the CPSF complex on the 3'UTR of pre-mRNAs. Interacts with WDR33. Interacts with ZC3H3.</text>
</comment>
<comment type="interaction">
    <interactant intactId="EBI-7894416">
        <id>P79101</id>
    </interactant>
    <interactant intactId="EBI-1779322">
        <id>P03120</id>
        <label>E2</label>
    </interactant>
    <organismsDiffer>true</organismsDiffer>
    <experiments>2</experiments>
</comment>
<comment type="subcellular location">
    <subcellularLocation>
        <location evidence="2">Nucleus</location>
    </subcellularLocation>
</comment>
<comment type="PTM">
    <text evidence="2">Sumoylated on Lys-462, Lys-465 and Lys-545, preferentially by SUMO3.</text>
</comment>
<comment type="similarity">
    <text evidence="4">Belongs to the metallo-beta-lactamase superfamily. RNA-metabolizing metallo-beta-lactamase-like family. CPSF3 subfamily.</text>
</comment>
<protein>
    <recommendedName>
        <fullName>Cleavage and polyadenylation specificity factor subunit 3</fullName>
        <ecNumber evidence="1">3.1.27.-</ecNumber>
    </recommendedName>
    <alternativeName>
        <fullName>Cleavage and polyadenylation specificity factor 73 kDa subunit</fullName>
        <shortName>CPSF 73 kDa subunit</shortName>
    </alternativeName>
    <alternativeName>
        <fullName>mRNA 3'-end-processing endonuclease CPSF-73</fullName>
    </alternativeName>
</protein>
<keyword id="KW-0007">Acetylation</keyword>
<keyword id="KW-0255">Endonuclease</keyword>
<keyword id="KW-0378">Hydrolase</keyword>
<keyword id="KW-1017">Isopeptide bond</keyword>
<keyword id="KW-0479">Metal-binding</keyword>
<keyword id="KW-0507">mRNA processing</keyword>
<keyword id="KW-0540">Nuclease</keyword>
<keyword id="KW-0539">Nucleus</keyword>
<keyword id="KW-0597">Phosphoprotein</keyword>
<keyword id="KW-1185">Reference proteome</keyword>
<keyword id="KW-0687">Ribonucleoprotein</keyword>
<keyword id="KW-0694">RNA-binding</keyword>
<keyword id="KW-0832">Ubl conjugation</keyword>
<keyword id="KW-0862">Zinc</keyword>
<sequence>MSAIPAEESDQLLIRPLGAGQEVGRSCIILEFKGRKIMLDCGIHPGLEGMDALPYIDLIDPAEIDLLLISHFHLDHCGALPWFLQKTSFKGRTFMTHATKAIYRWLLSDYVKVSNISADDMLYTETDLEESMDKIETINFHEVKEVAGIKFWCYHAGHVLGAAMFMIEIAGVKLLYTGDFSRQEDRHLMAAEIPNIKPDILIIESTYGTHIHEKREEREARFCNTVHDIVNRGGRGLIPVFALGRAQELLLILDEYWQNHPELHDIPIYYASSLAKKCMAVYQTYVNAMNDKIRKQININNPFVFKHISNLKSMDHFDDIGPSVVMASPGMMQSGLSRELFESWCTDKRNGVIIAGYCVEGTLAKHIMSEPEEITTMSGQKLPLKMSVDYISFSAHTDYQQTSEFIRALKPPHVILVHGEQNEMARLKAALIREYEDNDEVHIEVHNPRNTEAVTLNFRGEKLAKVMGFLADKKPEQGQRVSGILVKRNFNYHILSPCDLSNYTDLAMSTVKQTQAIPYTGPFNLLYYQLQKLTGDVEELEIQEKPALKVFKNITVIQEPGMVVLEWLANPSNDMYADTVTTVILEVQSNPKIRKGAVQKVSKKLEMHVYSKRLEIMLQDIFGEDCVSVKDGSILSVTVDGKTANINLETRTVECEEGSEDDESLREMVELAAQRLYEALTPVH</sequence>
<feature type="initiator methionine" description="Removed" evidence="2">
    <location>
        <position position="1"/>
    </location>
</feature>
<feature type="chain" id="PRO_0000074399" description="Cleavage and polyadenylation specificity factor subunit 3">
    <location>
        <begin position="2"/>
        <end position="684"/>
    </location>
</feature>
<feature type="active site" description="Proton donor" evidence="3">
    <location>
        <position position="396"/>
    </location>
</feature>
<feature type="binding site" evidence="2">
    <location>
        <position position="71"/>
    </location>
    <ligand>
        <name>Zn(2+)</name>
        <dbReference type="ChEBI" id="CHEBI:29105"/>
        <label>1</label>
    </ligand>
</feature>
<feature type="binding site" evidence="2">
    <location>
        <position position="73"/>
    </location>
    <ligand>
        <name>Zn(2+)</name>
        <dbReference type="ChEBI" id="CHEBI:29105"/>
        <label>1</label>
    </ligand>
</feature>
<feature type="binding site" evidence="2">
    <location>
        <position position="75"/>
    </location>
    <ligand>
        <name>Zn(2+)</name>
        <dbReference type="ChEBI" id="CHEBI:29105"/>
        <label>2</label>
    </ligand>
</feature>
<feature type="binding site" evidence="2">
    <location>
        <position position="76"/>
    </location>
    <ligand>
        <name>Zn(2+)</name>
        <dbReference type="ChEBI" id="CHEBI:29105"/>
        <label>2</label>
    </ligand>
</feature>
<feature type="binding site" evidence="2">
    <location>
        <position position="158"/>
    </location>
    <ligand>
        <name>Zn(2+)</name>
        <dbReference type="ChEBI" id="CHEBI:29105"/>
        <label>1</label>
    </ligand>
</feature>
<feature type="binding site" evidence="2">
    <location>
        <position position="179"/>
    </location>
    <ligand>
        <name>Zn(2+)</name>
        <dbReference type="ChEBI" id="CHEBI:29105"/>
        <label>1</label>
    </ligand>
</feature>
<feature type="binding site" evidence="2">
    <location>
        <position position="179"/>
    </location>
    <ligand>
        <name>Zn(2+)</name>
        <dbReference type="ChEBI" id="CHEBI:29105"/>
        <label>2</label>
    </ligand>
</feature>
<feature type="binding site" evidence="2">
    <location>
        <position position="418"/>
    </location>
    <ligand>
        <name>Zn(2+)</name>
        <dbReference type="ChEBI" id="CHEBI:29105"/>
        <label>2</label>
    </ligand>
</feature>
<feature type="modified residue" description="N-acetylserine" evidence="2">
    <location>
        <position position="2"/>
    </location>
</feature>
<feature type="modified residue" description="Phosphoserine" evidence="1">
    <location>
        <position position="659"/>
    </location>
</feature>
<feature type="modified residue" description="Phosphothreonine" evidence="2">
    <location>
        <position position="681"/>
    </location>
</feature>
<feature type="cross-link" description="Glycyl lysine isopeptide (Lys-Gly) (interchain with G-Cter in SUMO)" evidence="2">
    <location>
        <position position="462"/>
    </location>
</feature>
<feature type="cross-link" description="Glycyl lysine isopeptide (Lys-Gly) (interchain with G-Cter in SUMO)" evidence="2">
    <location>
        <position position="465"/>
    </location>
</feature>
<feature type="cross-link" description="Glycyl lysine isopeptide (Lys-Gly) (interchain with G-Cter in SUMO)" evidence="2">
    <location>
        <position position="545"/>
    </location>
</feature>
<dbReference type="EC" id="3.1.27.-" evidence="1"/>
<dbReference type="EMBL" id="X95906">
    <property type="protein sequence ID" value="CAA65151.1"/>
    <property type="molecule type" value="mRNA"/>
</dbReference>
<dbReference type="EMBL" id="BC104553">
    <property type="protein sequence ID" value="AAI04554.1"/>
    <property type="molecule type" value="mRNA"/>
</dbReference>
<dbReference type="RefSeq" id="NP_776709.1">
    <property type="nucleotide sequence ID" value="NM_174284.2"/>
</dbReference>
<dbReference type="SMR" id="P79101"/>
<dbReference type="FunCoup" id="P79101">
    <property type="interactions" value="4516"/>
</dbReference>
<dbReference type="IntAct" id="P79101">
    <property type="interactions" value="1"/>
</dbReference>
<dbReference type="MINT" id="P79101"/>
<dbReference type="STRING" id="9913.ENSBTAP00000026303"/>
<dbReference type="PaxDb" id="9913-ENSBTAP00000026303"/>
<dbReference type="GeneID" id="281712"/>
<dbReference type="KEGG" id="bta:281712"/>
<dbReference type="CTD" id="51692"/>
<dbReference type="VEuPathDB" id="HostDB:ENSBTAG00000019735"/>
<dbReference type="eggNOG" id="KOG1137">
    <property type="taxonomic scope" value="Eukaryota"/>
</dbReference>
<dbReference type="HOGENOM" id="CLU_009673_2_3_1"/>
<dbReference type="InParanoid" id="P79101"/>
<dbReference type="OMA" id="TRSVECE"/>
<dbReference type="OrthoDB" id="10249535at2759"/>
<dbReference type="TreeFam" id="TF105643"/>
<dbReference type="Reactome" id="R-BTA-159231">
    <property type="pathway name" value="Transport of Mature mRNA Derived from an Intronless Transcript"/>
</dbReference>
<dbReference type="Reactome" id="R-BTA-72187">
    <property type="pathway name" value="mRNA 3'-end processing"/>
</dbReference>
<dbReference type="Reactome" id="R-BTA-72203">
    <property type="pathway name" value="Processing of Capped Intron-Containing Pre-mRNA"/>
</dbReference>
<dbReference type="Reactome" id="R-BTA-73856">
    <property type="pathway name" value="RNA Polymerase II Transcription Termination"/>
</dbReference>
<dbReference type="Reactome" id="R-BTA-77595">
    <property type="pathway name" value="Processing of Intronless Pre-mRNAs"/>
</dbReference>
<dbReference type="Proteomes" id="UP000009136">
    <property type="component" value="Chromosome 11"/>
</dbReference>
<dbReference type="Bgee" id="ENSBTAG00000019735">
    <property type="expression patterns" value="Expressed in semen and 109 other cell types or tissues"/>
</dbReference>
<dbReference type="GO" id="GO:0005847">
    <property type="term" value="C:mRNA cleavage and polyadenylation specificity factor complex"/>
    <property type="evidence" value="ECO:0000250"/>
    <property type="project" value="UniProtKB"/>
</dbReference>
<dbReference type="GO" id="GO:1990904">
    <property type="term" value="C:ribonucleoprotein complex"/>
    <property type="evidence" value="ECO:0007669"/>
    <property type="project" value="UniProtKB-KW"/>
</dbReference>
<dbReference type="GO" id="GO:0004534">
    <property type="term" value="F:5'-3' RNA exonuclease activity"/>
    <property type="evidence" value="ECO:0000250"/>
    <property type="project" value="UniProtKB"/>
</dbReference>
<dbReference type="GO" id="GO:0046872">
    <property type="term" value="F:metal ion binding"/>
    <property type="evidence" value="ECO:0000250"/>
    <property type="project" value="UniProtKB"/>
</dbReference>
<dbReference type="GO" id="GO:0003723">
    <property type="term" value="F:RNA binding"/>
    <property type="evidence" value="ECO:0000250"/>
    <property type="project" value="UniProtKB"/>
</dbReference>
<dbReference type="GO" id="GO:0004521">
    <property type="term" value="F:RNA endonuclease activity"/>
    <property type="evidence" value="ECO:0000250"/>
    <property type="project" value="UniProtKB"/>
</dbReference>
<dbReference type="GO" id="GO:0031124">
    <property type="term" value="P:mRNA 3'-end processing"/>
    <property type="evidence" value="ECO:0000250"/>
    <property type="project" value="UniProtKB"/>
</dbReference>
<dbReference type="GO" id="GO:0006398">
    <property type="term" value="P:mRNA 3'-end processing by stem-loop binding and cleavage"/>
    <property type="evidence" value="ECO:0000250"/>
    <property type="project" value="UniProtKB"/>
</dbReference>
<dbReference type="GO" id="GO:1900087">
    <property type="term" value="P:positive regulation of G1/S transition of mitotic cell cycle"/>
    <property type="evidence" value="ECO:0000250"/>
    <property type="project" value="UniProtKB"/>
</dbReference>
<dbReference type="CDD" id="cd16292">
    <property type="entry name" value="CPSF3-like_MBL-fold"/>
    <property type="match status" value="1"/>
</dbReference>
<dbReference type="FunFam" id="3.40.50.10890:FF:000001">
    <property type="entry name" value="Cleavage and polyadenylation specificity factor subunit 3"/>
    <property type="match status" value="1"/>
</dbReference>
<dbReference type="FunFam" id="3.60.15.10:FF:000005">
    <property type="entry name" value="Cleavage and polyadenylation specificity factor subunit 3"/>
    <property type="match status" value="1"/>
</dbReference>
<dbReference type="Gene3D" id="3.40.50.10890">
    <property type="match status" value="1"/>
</dbReference>
<dbReference type="Gene3D" id="3.60.15.10">
    <property type="entry name" value="Ribonuclease Z/Hydroxyacylglutathione hydrolase-like"/>
    <property type="match status" value="1"/>
</dbReference>
<dbReference type="InterPro" id="IPR022712">
    <property type="entry name" value="Beta_Casp"/>
</dbReference>
<dbReference type="InterPro" id="IPR021718">
    <property type="entry name" value="CPSF73-100_C"/>
</dbReference>
<dbReference type="InterPro" id="IPR050698">
    <property type="entry name" value="MBL"/>
</dbReference>
<dbReference type="InterPro" id="IPR001279">
    <property type="entry name" value="Metallo-B-lactamas"/>
</dbReference>
<dbReference type="InterPro" id="IPR036866">
    <property type="entry name" value="RibonucZ/Hydroxyglut_hydro"/>
</dbReference>
<dbReference type="InterPro" id="IPR011108">
    <property type="entry name" value="RMMBL"/>
</dbReference>
<dbReference type="PANTHER" id="PTHR11203">
    <property type="entry name" value="CLEAVAGE AND POLYADENYLATION SPECIFICITY FACTOR FAMILY MEMBER"/>
    <property type="match status" value="1"/>
</dbReference>
<dbReference type="PANTHER" id="PTHR11203:SF11">
    <property type="entry name" value="CLEAVAGE AND POLYADENYLATION SPECIFICITY FACTOR SUBUNIT 3"/>
    <property type="match status" value="1"/>
</dbReference>
<dbReference type="Pfam" id="PF10996">
    <property type="entry name" value="Beta-Casp"/>
    <property type="match status" value="1"/>
</dbReference>
<dbReference type="Pfam" id="PF11718">
    <property type="entry name" value="CPSF73-100_C"/>
    <property type="match status" value="1"/>
</dbReference>
<dbReference type="Pfam" id="PF00753">
    <property type="entry name" value="Lactamase_B"/>
    <property type="match status" value="1"/>
</dbReference>
<dbReference type="Pfam" id="PF07521">
    <property type="entry name" value="RMMBL"/>
    <property type="match status" value="1"/>
</dbReference>
<dbReference type="SMART" id="SM01027">
    <property type="entry name" value="Beta-Casp"/>
    <property type="match status" value="1"/>
</dbReference>
<dbReference type="SMART" id="SM01098">
    <property type="entry name" value="CPSF73-100_C"/>
    <property type="match status" value="1"/>
</dbReference>
<dbReference type="SMART" id="SM00849">
    <property type="entry name" value="Lactamase_B"/>
    <property type="match status" value="1"/>
</dbReference>
<dbReference type="SUPFAM" id="SSF56281">
    <property type="entry name" value="Metallo-hydrolase/oxidoreductase"/>
    <property type="match status" value="1"/>
</dbReference>
<gene>
    <name type="primary">CPSF3</name>
    <name type="synonym">CPSF73</name>
</gene>
<accession>P79101</accession>
<accession>Q3MHX7</accession>